<evidence type="ECO:0000250" key="1">
    <source>
        <dbReference type="UniProtKB" id="P35081"/>
    </source>
</evidence>
<evidence type="ECO:0000250" key="2">
    <source>
        <dbReference type="UniProtKB" id="P84177"/>
    </source>
</evidence>
<evidence type="ECO:0000250" key="3">
    <source>
        <dbReference type="UniProtKB" id="Q9FR39"/>
    </source>
</evidence>
<evidence type="ECO:0000255" key="4"/>
<evidence type="ECO:0000255" key="5">
    <source>
        <dbReference type="RuleBase" id="RU003908"/>
    </source>
</evidence>
<evidence type="ECO:0000255" key="6">
    <source>
        <dbReference type="RuleBase" id="RU003909"/>
    </source>
</evidence>
<evidence type="ECO:0000269" key="7">
    <source>
    </source>
</evidence>
<evidence type="ECO:0000269" key="8">
    <source>
    </source>
</evidence>
<evidence type="ECO:0000269" key="9">
    <source>
    </source>
</evidence>
<evidence type="ECO:0000303" key="10">
    <source>
    </source>
</evidence>
<evidence type="ECO:0000303" key="11">
    <source>
    </source>
</evidence>
<evidence type="ECO:0000303" key="12">
    <source>
    </source>
</evidence>
<evidence type="ECO:0000305" key="13"/>
<evidence type="ECO:0000312" key="14">
    <source>
        <dbReference type="EMBL" id="AAU43733.1"/>
    </source>
</evidence>
<organism evidence="14">
    <name type="scientific">Citrullus lanatus</name>
    <name type="common">Watermelon</name>
    <name type="synonym">Citrullus vulgaris</name>
    <dbReference type="NCBI Taxonomy" id="3654"/>
    <lineage>
        <taxon>Eukaryota</taxon>
        <taxon>Viridiplantae</taxon>
        <taxon>Streptophyta</taxon>
        <taxon>Embryophyta</taxon>
        <taxon>Tracheophyta</taxon>
        <taxon>Spermatophyta</taxon>
        <taxon>Magnoliopsida</taxon>
        <taxon>eudicotyledons</taxon>
        <taxon>Gunneridae</taxon>
        <taxon>Pentapetalae</taxon>
        <taxon>rosids</taxon>
        <taxon>fabids</taxon>
        <taxon>Cucurbitales</taxon>
        <taxon>Cucurbitaceae</taxon>
        <taxon>Benincaseae</taxon>
        <taxon>Citrullus</taxon>
    </lineage>
</organism>
<reference evidence="14" key="1">
    <citation type="journal article" date="2010" name="Int. Arch. Allergy Immunol.">
        <title>Watermelon profilin: characterization of a major allergen as a model for plant-derived food profilins.</title>
        <authorList>
            <person name="Cases B."/>
            <person name="Pastor-Vargas C."/>
            <person name="Dones F.G."/>
            <person name="Perez-Gordo M."/>
            <person name="Maroto A.S."/>
            <person name="de las Heras M."/>
            <person name="Vivanco F."/>
            <person name="Cuesta-Herranz J."/>
        </authorList>
    </citation>
    <scope>NUCLEOTIDE SEQUENCE [MRNA]</scope>
    <scope>PROTEIN SEQUENCE OF 72-84 AND 122-131</scope>
    <scope>FUNCTION</scope>
    <scope>IDENTIFICATION BY MASS SPECTROMETRY</scope>
    <scope>ALLERGEN</scope>
</reference>
<reference key="2">
    <citation type="journal article" date="2009" name="Int. Arch. Allergy Immunol.">
        <title>Identification of major allergens in watermelon.</title>
        <authorList>
            <person name="Pastor C."/>
            <person name="Cuesta-Herranz J."/>
            <person name="Cases B."/>
            <person name="Perez-Gordo M."/>
            <person name="Figueredo E."/>
            <person name="de las Heras M."/>
            <person name="Vivanco F."/>
        </authorList>
    </citation>
    <scope>PROTEIN SEQUENCE OF 72-84 AND 122-131</scope>
    <scope>IDENTIFICATION BY MASS SPECTROMETRY</scope>
    <scope>ALLERGEN</scope>
</reference>
<reference key="3">
    <citation type="journal article" date="2003" name="J. Allergy Clin. Immunol.">
        <title>Profilin is a relevant melon allergen susceptible to pepsin digestion in patients with oral allergy syndrome.</title>
        <authorList>
            <person name="Rodriguez-Perez R."/>
            <person name="Crespo J.F."/>
            <person name="Rodriguez J."/>
            <person name="Salcedo G."/>
        </authorList>
    </citation>
    <scope>ALLERGEN</scope>
</reference>
<name>PROF_CITLA</name>
<proteinExistence type="evidence at protein level"/>
<protein>
    <recommendedName>
        <fullName evidence="6 10 11 12">Profilin</fullName>
    </recommendedName>
    <allergenName evidence="13">Citr l 2.0101</allergenName>
</protein>
<accession>Q5XWE1</accession>
<keyword id="KW-0009">Actin-binding</keyword>
<keyword id="KW-0020">Allergen</keyword>
<keyword id="KW-0963">Cytoplasm</keyword>
<keyword id="KW-0206">Cytoskeleton</keyword>
<keyword id="KW-0903">Direct protein sequencing</keyword>
<sequence>MSWQAYVDDHLMCEIEGNHLTSAAIIGQDGSVWAKSENFPQLKPEEITGILNDFNEPGTLAPTGLYIGGSKYMVIQGEPGAVIRGKKGPGGVTVKKTALALVIGIYDEPMTPGQCNMIVERLGDYLIEQGL</sequence>
<comment type="function">
    <text evidence="3 9">Binds to actin and affects the structure of the cytoskeleton. At high concentrations, profilin prevents the polymerization of actin, whereas it enhances it at low concentrations (By similarity). Has a high affinity for poly-proline (PubMed:20484919).</text>
</comment>
<comment type="subunit">
    <text evidence="5">Occurs in many kinds of cells as a complex with monomeric actin in a 1:1 ratio.</text>
</comment>
<comment type="subcellular location">
    <subcellularLocation>
        <location evidence="1">Cytoplasm</location>
        <location evidence="1">Cytoskeleton</location>
    </subcellularLocation>
</comment>
<comment type="allergen">
    <text evidence="7 8 9">Causes an allergic reaction in human (PubMed:12642849, PubMed:19295232, PubMed:20484919). Binds to IgE of patients allergic to melon (Cucumis melo) (PubMed:12642849). Binds to IgE of patients with oral allergy symptoms and pollen allergy to watermelon (PubMed:19295232, PubMed:20484919). Binds to IgE in 100% of the 17 patients tested (PubMed:20484919). Binds to IgE in 56% of the 23 patients tested. IgE-binding is lost by digestion with pepsin (PubMed:19295232). Induces degranulation of human basophils (PubMed:20484919).</text>
</comment>
<comment type="similarity">
    <text evidence="4 6">Belongs to the profilin family.</text>
</comment>
<dbReference type="EMBL" id="AY730591">
    <property type="protein sequence ID" value="AAU43733.1"/>
    <property type="molecule type" value="mRNA"/>
</dbReference>
<dbReference type="SMR" id="Q5XWE1"/>
<dbReference type="Allergome" id="11978">
    <property type="allergen name" value="Citr l 2.0101"/>
</dbReference>
<dbReference type="Allergome" id="984">
    <property type="allergen name" value="Citr l 2"/>
</dbReference>
<dbReference type="GO" id="GO:0005938">
    <property type="term" value="C:cell cortex"/>
    <property type="evidence" value="ECO:0007669"/>
    <property type="project" value="TreeGrafter"/>
</dbReference>
<dbReference type="GO" id="GO:0005856">
    <property type="term" value="C:cytoskeleton"/>
    <property type="evidence" value="ECO:0000250"/>
    <property type="project" value="UniProtKB"/>
</dbReference>
<dbReference type="GO" id="GO:0003785">
    <property type="term" value="F:actin monomer binding"/>
    <property type="evidence" value="ECO:0000250"/>
    <property type="project" value="UniProtKB"/>
</dbReference>
<dbReference type="GO" id="GO:0070064">
    <property type="term" value="F:proline-rich region binding"/>
    <property type="evidence" value="ECO:0000314"/>
    <property type="project" value="UniProtKB"/>
</dbReference>
<dbReference type="CDD" id="cd00148">
    <property type="entry name" value="PROF"/>
    <property type="match status" value="1"/>
</dbReference>
<dbReference type="FunFam" id="3.30.450.30:FF:000001">
    <property type="entry name" value="Profilin"/>
    <property type="match status" value="1"/>
</dbReference>
<dbReference type="Gene3D" id="3.30.450.30">
    <property type="entry name" value="Dynein light chain 2a, cytoplasmic"/>
    <property type="match status" value="1"/>
</dbReference>
<dbReference type="InterPro" id="IPR048278">
    <property type="entry name" value="PFN"/>
</dbReference>
<dbReference type="InterPro" id="IPR005455">
    <property type="entry name" value="PFN_euk"/>
</dbReference>
<dbReference type="InterPro" id="IPR036140">
    <property type="entry name" value="PFN_sf"/>
</dbReference>
<dbReference type="InterPro" id="IPR027310">
    <property type="entry name" value="Profilin_CS"/>
</dbReference>
<dbReference type="PANTHER" id="PTHR11604">
    <property type="entry name" value="PROFILIN"/>
    <property type="match status" value="1"/>
</dbReference>
<dbReference type="PANTHER" id="PTHR11604:SF46">
    <property type="entry name" value="PROFILIN-1"/>
    <property type="match status" value="1"/>
</dbReference>
<dbReference type="Pfam" id="PF00235">
    <property type="entry name" value="Profilin"/>
    <property type="match status" value="1"/>
</dbReference>
<dbReference type="PRINTS" id="PR00392">
    <property type="entry name" value="PROFILIN"/>
</dbReference>
<dbReference type="PRINTS" id="PR01640">
    <property type="entry name" value="PROFILINPLNT"/>
</dbReference>
<dbReference type="SMART" id="SM00392">
    <property type="entry name" value="PROF"/>
    <property type="match status" value="1"/>
</dbReference>
<dbReference type="SUPFAM" id="SSF55770">
    <property type="entry name" value="Profilin (actin-binding protein)"/>
    <property type="match status" value="1"/>
</dbReference>
<dbReference type="PROSITE" id="PS00414">
    <property type="entry name" value="PROFILIN"/>
    <property type="match status" value="1"/>
</dbReference>
<feature type="initiator methionine" description="Removed" evidence="2">
    <location>
        <position position="1"/>
    </location>
</feature>
<feature type="chain" id="PRO_0000450612" description="Profilin">
    <location>
        <begin position="2"/>
        <end position="131"/>
    </location>
</feature>
<feature type="sequence conflict" description="In Ref. 1; AA sequence and 2; AA sequence." evidence="13" ref="1 2">
    <original>I</original>
    <variation>V</variation>
    <location>
        <position position="127"/>
    </location>
</feature>